<feature type="chain" id="PRO_0000455570" description="Gasdermin bGSDM">
    <location>
        <begin position="1"/>
        <end position="271"/>
    </location>
</feature>
<feature type="chain" id="PRO_0000455571" description="Gasdermin bGSDM, N-terminus">
    <location>
        <begin position="1"/>
        <end status="unknown"/>
    </location>
</feature>
<feature type="transmembrane region" description="Beta stranded" evidence="1">
    <location>
        <begin position="74"/>
        <end position="90"/>
    </location>
</feature>
<feature type="transmembrane region" description="Beta stranded" evidence="1">
    <location>
        <begin position="102"/>
        <end position="120"/>
    </location>
</feature>
<feature type="transmembrane region" description="Beta stranded" evidence="1">
    <location>
        <begin position="168"/>
        <end position="185"/>
    </location>
</feature>
<feature type="transmembrane region" description="Beta stranded" evidence="1">
    <location>
        <begin position="194"/>
        <end position="210"/>
    </location>
</feature>
<feature type="region of interest" description="C-terminal region" evidence="8">
    <location>
        <begin status="unknown"/>
        <end position="271"/>
    </location>
</feature>
<feature type="lipid moiety-binding region" description="S-palmitoyl cysteine" evidence="2">
    <location>
        <position position="7"/>
    </location>
</feature>
<feature type="mutagenesis site" description="4-gene operon still protects against phage." evidence="4">
    <original>C</original>
    <variation>A</variation>
    <location>
        <position position="7"/>
    </location>
</feature>
<name>GSDM_LYSEN</name>
<dbReference type="EMBL" id="CP013140">
    <property type="protein sequence ID" value="ALN60084.1"/>
    <property type="molecule type" value="Genomic_DNA"/>
</dbReference>
<dbReference type="EMBL" id="CP040656">
    <property type="protein sequence ID" value="QCW28095.1"/>
    <property type="molecule type" value="Genomic_DNA"/>
</dbReference>
<dbReference type="RefSeq" id="WP_057949280.1">
    <property type="nucleotide sequence ID" value="NZ_CP013140.1"/>
</dbReference>
<dbReference type="SMR" id="A0A0S2DNG5"/>
<dbReference type="STRING" id="69.GLE_4743"/>
<dbReference type="KEGG" id="lez:GLE_4743"/>
<dbReference type="PATRIC" id="fig|69.6.peg.4677"/>
<dbReference type="OrthoDB" id="583589at2"/>
<dbReference type="Proteomes" id="UP000061569">
    <property type="component" value="Chromosome"/>
</dbReference>
<dbReference type="GO" id="GO:0005737">
    <property type="term" value="C:cytoplasm"/>
    <property type="evidence" value="ECO:0007669"/>
    <property type="project" value="UniProtKB-SubCell"/>
</dbReference>
<dbReference type="GO" id="GO:0005886">
    <property type="term" value="C:plasma membrane"/>
    <property type="evidence" value="ECO:0007669"/>
    <property type="project" value="UniProtKB-SubCell"/>
</dbReference>
<dbReference type="GO" id="GO:0051607">
    <property type="term" value="P:defense response to virus"/>
    <property type="evidence" value="ECO:0007669"/>
    <property type="project" value="UniProtKB-KW"/>
</dbReference>
<proteinExistence type="evidence at protein level"/>
<gene>
    <name evidence="6" type="ORF">FE772_23055</name>
    <name evidence="7" type="ORF">Ga0399710_4913</name>
    <name evidence="5" type="ORF">GLE_4743</name>
</gene>
<sequence length="271" mass="28450">MSILPGCKDPSLSALKSKGYNVVQLPRADLRPTQLLVEKSKRLQRLGELLSVFDAAADGPPAPPVSADRPGPNIAGTQSADLDVDLGLSVLRGIISALGGSTLGVDAAFARAATVQFEFSSTLENNSELALIDRFLAASRVNPHARAVAEMLEQDQVYVVTSTLKAQRINVAAKDSNKQSLGLNLPVIQDAIGANVKIAAAAASGSTVSFEGAVPLVFGFQAVRLIFEQGRYRTMRLVDAGGVVAEAVRPDGAADGEPPCYLDVEAMLLDR</sequence>
<comment type="function">
    <molecule>Gasdermin bGSDM</molecule>
    <text evidence="3 4">Involved in defense against bacteriophages. When this probable 4 gene operon (bGSDM-FE772_23060-FE772_23065-FE772_23070) is inserted into E.coli it provides nearly 100-fold protection against phages T5 and T6 and about 8-fold against phage T4. The operon without bGSDM no longer protects against phage (PubMed:35025633). Cleavage of this precursor by its dedicated protease(s) releases the active moiety (gasdermin bGSDM, N-terminus) which inserts into membranes, forming pores and triggering cell death (By similarity).</text>
</comment>
<comment type="function">
    <molecule>Gasdermin bGSDM, N-terminus</molecule>
    <text evidence="3">Pore-forming protein that causes membrane permeabilization via a pyroptosis-like activity. Makes ring-like pores when released.</text>
</comment>
<comment type="activity regulation">
    <molecule>Gasdermin bGSDM</molecule>
    <text evidence="3">The full-length protein before cleavage is inactive: intramolecular interactions between the N-terminal domain and the C-terminal region as well as the lipid modification, mediate autoinhibition. The pyroptosis-like-inducing activity is carried by the released N-terminal domain (Gasdermin bGSDM, N-terminus).</text>
</comment>
<comment type="subunit">
    <molecule>Gasdermin bGSDM</molecule>
    <text evidence="3">Monomer.</text>
</comment>
<comment type="subunit">
    <molecule>Gasdermin bGSDM, N-terminus</molecule>
    <text evidence="1">Forms large, homooligomeric ring-shaped pores when inserted in membranes.</text>
</comment>
<comment type="subcellular location">
    <molecule>Gasdermin bGSDM</molecule>
    <subcellularLocation>
        <location evidence="3">Cytoplasm</location>
    </subcellularLocation>
</comment>
<comment type="subcellular location">
    <molecule>Gasdermin bGSDM, N-terminus</molecule>
    <subcellularLocation>
        <location evidence="3">Cell inner membrane</location>
        <topology evidence="8">Multi-pass membrane protein</topology>
    </subcellularLocation>
</comment>
<comment type="domain">
    <text evidence="3">The N-terminus has marked structural similarity to the mammalian gasdermin N-terminal domain. The C-terminal region wraps around the twisted beta sheet core, probably stabilizing the inactive state.</text>
</comment>
<comment type="domain">
    <text evidence="1">The beta-stranded transmembrane 'fingers' of the active protein form by local refolding of several alpha helices found only in the inactive state. Reorientation of the N-terminus probably flips the palmitoyl moiety for insertion into the membrane.</text>
</comment>
<comment type="PTM">
    <text evidence="1 2">Palmitoylation helps stabilize the inactive state; may self palmitoylate. Palmitoylation plays a significant role in pore formation.</text>
</comment>
<comment type="disruption phenotype">
    <text evidence="4">When deleted from its operon, no longer protects E.coli against bacteriophages T4, T5 or T6.</text>
</comment>
<comment type="similarity">
    <text evidence="4">Belongs to the bacterial gasdermin family.</text>
</comment>
<reference key="1">
    <citation type="journal article" date="2015" name="BMC Genomics">
        <title>Comparative genomics and metabolic profiling of the genus Lysobacter.</title>
        <authorList>
            <person name="de Bruijn I."/>
            <person name="Cheng X."/>
            <person name="de Jager V."/>
            <person name="Exposito R.G."/>
            <person name="Watrous J."/>
            <person name="Patel N."/>
            <person name="Postma J."/>
            <person name="Dorrestein P.C."/>
            <person name="Kobayashi D."/>
            <person name="Raaijmakers J.M."/>
        </authorList>
    </citation>
    <scope>NUCLEOTIDE SEQUENCE [LARGE SCALE GENOMIC DNA]</scope>
    <source>
        <strain>C3</strain>
    </source>
</reference>
<reference key="2">
    <citation type="journal article" date="2019" name="Appl. Environ. Microbiol.">
        <title>Interspecies and Intraspecies Signals Synergistically Regulate Lysobacter enzymogenes Twitching Motility.</title>
        <authorList>
            <person name="Feng T."/>
            <person name="Han Y."/>
            <person name="Li B."/>
            <person name="Li Z."/>
            <person name="Yu Y."/>
            <person name="Sun Q."/>
            <person name="Li X."/>
            <person name="Du L."/>
            <person name="Zhang X.H."/>
            <person name="Wang Y."/>
        </authorList>
    </citation>
    <scope>NUCLEOTIDE SEQUENCE [LARGE SCALE GENOMIC DNA]</scope>
    <source>
        <strain>YC36</strain>
    </source>
</reference>
<reference key="3">
    <citation type="journal article" date="2022" name="Science">
        <title>Bacterial gasdermins reveal an ancient mechanism of cell death.</title>
        <authorList>
            <person name="Johnson A.G."/>
            <person name="Wein T."/>
            <person name="Mayer M.L."/>
            <person name="Duncan-Lowey B."/>
            <person name="Yirmiya E."/>
            <person name="Oppenheimer-Shaanan Y."/>
            <person name="Amitai G."/>
            <person name="Sorek R."/>
            <person name="Kranzusch P.J."/>
        </authorList>
    </citation>
    <scope>FUNCTION</scope>
    <scope>DISRUPTION PHENOTYPE</scope>
    <scope>MUTAGENESIS OF CYS-7</scope>
    <source>
        <strain>YC36</strain>
    </source>
</reference>
<keyword id="KW-0051">Antiviral defense</keyword>
<keyword id="KW-0997">Cell inner membrane</keyword>
<keyword id="KW-1003">Cell membrane</keyword>
<keyword id="KW-0963">Cytoplasm</keyword>
<keyword id="KW-0449">Lipoprotein</keyword>
<keyword id="KW-0472">Membrane</keyword>
<keyword id="KW-0564">Palmitate</keyword>
<keyword id="KW-0812">Transmembrane</keyword>
<keyword id="KW-1134">Transmembrane beta strand</keyword>
<accession>A0A0S2DNG5</accession>
<protein>
    <recommendedName>
        <fullName evidence="8">Gasdermin bGSDM</fullName>
        <shortName evidence="7">bGSDM</shortName>
    </recommendedName>
    <alternativeName>
        <fullName evidence="7">Bacterial gasdermin</fullName>
    </alternativeName>
    <component>
        <recommendedName>
            <fullName evidence="8">Gasdermin bGSDM, N-terminus</fullName>
        </recommendedName>
    </component>
</protein>
<evidence type="ECO:0000250" key="1">
    <source>
        <dbReference type="UniProtKB" id="A0A2T4VDM4"/>
    </source>
</evidence>
<evidence type="ECO:0000250" key="2">
    <source>
        <dbReference type="UniProtKB" id="P0DV46"/>
    </source>
</evidence>
<evidence type="ECO:0000250" key="3">
    <source>
        <dbReference type="UniProtKB" id="P0DV48"/>
    </source>
</evidence>
<evidence type="ECO:0000269" key="4">
    <source>
    </source>
</evidence>
<evidence type="ECO:0000303" key="5">
    <source>
    </source>
</evidence>
<evidence type="ECO:0000303" key="6">
    <source>
    </source>
</evidence>
<evidence type="ECO:0000303" key="7">
    <source>
    </source>
</evidence>
<evidence type="ECO:0000305" key="8"/>
<organism>
    <name type="scientific">Lysobacter enzymogenes</name>
    <dbReference type="NCBI Taxonomy" id="69"/>
    <lineage>
        <taxon>Bacteria</taxon>
        <taxon>Pseudomonadati</taxon>
        <taxon>Pseudomonadota</taxon>
        <taxon>Gammaproteobacteria</taxon>
        <taxon>Lysobacterales</taxon>
        <taxon>Lysobacteraceae</taxon>
        <taxon>Lysobacter</taxon>
    </lineage>
</organism>